<organism>
    <name type="scientific">Methanosphaerula palustris (strain ATCC BAA-1556 / DSM 19958 / E1-9c)</name>
    <dbReference type="NCBI Taxonomy" id="521011"/>
    <lineage>
        <taxon>Archaea</taxon>
        <taxon>Methanobacteriati</taxon>
        <taxon>Methanobacteriota</taxon>
        <taxon>Stenosarchaea group</taxon>
        <taxon>Methanomicrobia</taxon>
        <taxon>Methanomicrobiales</taxon>
        <taxon>Methanoregulaceae</taxon>
        <taxon>Methanosphaerula</taxon>
    </lineage>
</organism>
<reference key="1">
    <citation type="journal article" date="2015" name="Genome Announc.">
        <title>Complete Genome Sequence of Methanosphaerula palustris E1-9CT, a Hydrogenotrophic Methanogen Isolated from a Minerotrophic Fen Peatland.</title>
        <authorList>
            <person name="Cadillo-Quiroz H."/>
            <person name="Browne P."/>
            <person name="Kyrpides N."/>
            <person name="Woyke T."/>
            <person name="Goodwin L."/>
            <person name="Detter C."/>
            <person name="Yavitt J.B."/>
            <person name="Zinder S.H."/>
        </authorList>
    </citation>
    <scope>NUCLEOTIDE SEQUENCE [LARGE SCALE GENOMIC DNA]</scope>
    <source>
        <strain>ATCC BAA-1556 / DSM 19958 / E1-9c</strain>
    </source>
</reference>
<keyword id="KW-1185">Reference proteome</keyword>
<keyword id="KW-0687">Ribonucleoprotein</keyword>
<keyword id="KW-0689">Ribosomal protein</keyword>
<keyword id="KW-0694">RNA-binding</keyword>
<keyword id="KW-0699">rRNA-binding</keyword>
<feature type="chain" id="PRO_1000165758" description="Large ribosomal subunit protein uL2">
    <location>
        <begin position="1"/>
        <end position="239"/>
    </location>
</feature>
<feature type="region of interest" description="Disordered" evidence="2">
    <location>
        <begin position="1"/>
        <end position="20"/>
    </location>
</feature>
<feature type="region of interest" description="Disordered" evidence="2">
    <location>
        <begin position="202"/>
        <end position="239"/>
    </location>
</feature>
<sequence>MGHRIKTQNRGRGGPTYRAPSHQYKAELKHLGNDKVTVRGVIIDIEHDPARHTPIALVRLEGEGKKVYLLVTEGLGVGDQVAWGPEAEVKNGNTLPISKIPTGSYICNIEARPGDGGKFVRASGVQAIIIDKTVDRVGVKMPSGKMKWFSSRCLATVGVVAGGGRGEKPFVKAGKKFHKVKSQATYWPRVRGVAMNVIDHPFGGGGHQHTGRPKTVSRGTSPGRKVGSVAARRTGRRKR</sequence>
<comment type="function">
    <text evidence="1">One of the primary rRNA binding proteins. Required for association of the 30S and 50S subunits to form the 70S ribosome, for tRNA binding and peptide bond formation. It has been suggested to have peptidyltransferase activity; this is somewhat controversial. Makes several contacts with the 16S rRNA in the 70S ribosome.</text>
</comment>
<comment type="subunit">
    <text evidence="1">Part of the 50S ribosomal subunit. Forms a bridge to the 30S subunit in the 70S ribosome.</text>
</comment>
<comment type="similarity">
    <text evidence="1">Belongs to the universal ribosomal protein uL2 family.</text>
</comment>
<gene>
    <name evidence="1" type="primary">rpl2</name>
    <name type="ordered locus">Mpal_0445</name>
</gene>
<accession>B8GKD6</accession>
<protein>
    <recommendedName>
        <fullName evidence="1">Large ribosomal subunit protein uL2</fullName>
    </recommendedName>
    <alternativeName>
        <fullName evidence="3">50S ribosomal protein L2</fullName>
    </alternativeName>
</protein>
<dbReference type="EMBL" id="CP001338">
    <property type="protein sequence ID" value="ACL15819.1"/>
    <property type="molecule type" value="Genomic_DNA"/>
</dbReference>
<dbReference type="RefSeq" id="WP_012617138.1">
    <property type="nucleotide sequence ID" value="NC_011832.1"/>
</dbReference>
<dbReference type="SMR" id="B8GKD6"/>
<dbReference type="STRING" id="521011.Mpal_0445"/>
<dbReference type="GeneID" id="7272769"/>
<dbReference type="KEGG" id="mpl:Mpal_0445"/>
<dbReference type="eggNOG" id="arCOG04067">
    <property type="taxonomic scope" value="Archaea"/>
</dbReference>
<dbReference type="HOGENOM" id="CLU_036235_0_3_2"/>
<dbReference type="OrthoDB" id="5987at2157"/>
<dbReference type="Proteomes" id="UP000002457">
    <property type="component" value="Chromosome"/>
</dbReference>
<dbReference type="GO" id="GO:0022625">
    <property type="term" value="C:cytosolic large ribosomal subunit"/>
    <property type="evidence" value="ECO:0007669"/>
    <property type="project" value="TreeGrafter"/>
</dbReference>
<dbReference type="GO" id="GO:0019843">
    <property type="term" value="F:rRNA binding"/>
    <property type="evidence" value="ECO:0007669"/>
    <property type="project" value="UniProtKB-UniRule"/>
</dbReference>
<dbReference type="GO" id="GO:0003735">
    <property type="term" value="F:structural constituent of ribosome"/>
    <property type="evidence" value="ECO:0007669"/>
    <property type="project" value="InterPro"/>
</dbReference>
<dbReference type="GO" id="GO:0002181">
    <property type="term" value="P:cytoplasmic translation"/>
    <property type="evidence" value="ECO:0007669"/>
    <property type="project" value="TreeGrafter"/>
</dbReference>
<dbReference type="FunFam" id="2.30.30.30:FF:000001">
    <property type="entry name" value="50S ribosomal protein L2"/>
    <property type="match status" value="1"/>
</dbReference>
<dbReference type="FunFam" id="4.10.950.10:FF:000002">
    <property type="entry name" value="60S ribosomal protein L2"/>
    <property type="match status" value="1"/>
</dbReference>
<dbReference type="Gene3D" id="2.30.30.30">
    <property type="match status" value="1"/>
</dbReference>
<dbReference type="Gene3D" id="2.40.50.140">
    <property type="entry name" value="Nucleic acid-binding proteins"/>
    <property type="match status" value="1"/>
</dbReference>
<dbReference type="Gene3D" id="4.10.950.10">
    <property type="entry name" value="Ribosomal protein L2, domain 3"/>
    <property type="match status" value="1"/>
</dbReference>
<dbReference type="HAMAP" id="MF_01320_A">
    <property type="entry name" value="Ribosomal_uL2_A"/>
    <property type="match status" value="1"/>
</dbReference>
<dbReference type="InterPro" id="IPR012340">
    <property type="entry name" value="NA-bd_OB-fold"/>
</dbReference>
<dbReference type="InterPro" id="IPR014722">
    <property type="entry name" value="Rib_uL2_dom2"/>
</dbReference>
<dbReference type="InterPro" id="IPR002171">
    <property type="entry name" value="Ribosomal_uL2"/>
</dbReference>
<dbReference type="InterPro" id="IPR023672">
    <property type="entry name" value="Ribosomal_uL2_arc_euk"/>
</dbReference>
<dbReference type="InterPro" id="IPR022669">
    <property type="entry name" value="Ribosomal_uL2_C"/>
</dbReference>
<dbReference type="InterPro" id="IPR014726">
    <property type="entry name" value="Ribosomal_uL2_dom3"/>
</dbReference>
<dbReference type="InterPro" id="IPR022666">
    <property type="entry name" value="Ribosomal_uL2_RNA-bd_dom"/>
</dbReference>
<dbReference type="InterPro" id="IPR008991">
    <property type="entry name" value="Translation_prot_SH3-like_sf"/>
</dbReference>
<dbReference type="NCBIfam" id="NF007180">
    <property type="entry name" value="PRK09612.1"/>
    <property type="match status" value="1"/>
</dbReference>
<dbReference type="PANTHER" id="PTHR13691:SF16">
    <property type="entry name" value="LARGE RIBOSOMAL SUBUNIT PROTEIN UL2"/>
    <property type="match status" value="1"/>
</dbReference>
<dbReference type="PANTHER" id="PTHR13691">
    <property type="entry name" value="RIBOSOMAL PROTEIN L2"/>
    <property type="match status" value="1"/>
</dbReference>
<dbReference type="Pfam" id="PF00181">
    <property type="entry name" value="Ribosomal_L2"/>
    <property type="match status" value="1"/>
</dbReference>
<dbReference type="Pfam" id="PF03947">
    <property type="entry name" value="Ribosomal_L2_C"/>
    <property type="match status" value="1"/>
</dbReference>
<dbReference type="PIRSF" id="PIRSF002158">
    <property type="entry name" value="Ribosomal_L2"/>
    <property type="match status" value="1"/>
</dbReference>
<dbReference type="SMART" id="SM01383">
    <property type="entry name" value="Ribosomal_L2"/>
    <property type="match status" value="1"/>
</dbReference>
<dbReference type="SMART" id="SM01382">
    <property type="entry name" value="Ribosomal_L2_C"/>
    <property type="match status" value="1"/>
</dbReference>
<dbReference type="SUPFAM" id="SSF50249">
    <property type="entry name" value="Nucleic acid-binding proteins"/>
    <property type="match status" value="1"/>
</dbReference>
<dbReference type="SUPFAM" id="SSF50104">
    <property type="entry name" value="Translation proteins SH3-like domain"/>
    <property type="match status" value="1"/>
</dbReference>
<proteinExistence type="inferred from homology"/>
<evidence type="ECO:0000255" key="1">
    <source>
        <dbReference type="HAMAP-Rule" id="MF_01320"/>
    </source>
</evidence>
<evidence type="ECO:0000256" key="2">
    <source>
        <dbReference type="SAM" id="MobiDB-lite"/>
    </source>
</evidence>
<evidence type="ECO:0000305" key="3"/>
<name>RL2_METPE</name>